<accession>Q16K67</accession>
<reference key="1">
    <citation type="journal article" date="2007" name="Science">
        <title>Genome sequence of Aedes aegypti, a major arbovirus vector.</title>
        <authorList>
            <person name="Nene V."/>
            <person name="Wortman J.R."/>
            <person name="Lawson D."/>
            <person name="Haas B.J."/>
            <person name="Kodira C.D."/>
            <person name="Tu Z.J."/>
            <person name="Loftus B.J."/>
            <person name="Xi Z."/>
            <person name="Megy K."/>
            <person name="Grabherr M."/>
            <person name="Ren Q."/>
            <person name="Zdobnov E.M."/>
            <person name="Lobo N.F."/>
            <person name="Campbell K.S."/>
            <person name="Brown S.E."/>
            <person name="Bonaldo M.F."/>
            <person name="Zhu J."/>
            <person name="Sinkins S.P."/>
            <person name="Hogenkamp D.G."/>
            <person name="Amedeo P."/>
            <person name="Arensburger P."/>
            <person name="Atkinson P.W."/>
            <person name="Bidwell S.L."/>
            <person name="Biedler J."/>
            <person name="Birney E."/>
            <person name="Bruggner R.V."/>
            <person name="Costas J."/>
            <person name="Coy M.R."/>
            <person name="Crabtree J."/>
            <person name="Crawford M."/>
            <person name="DeBruyn B."/>
            <person name="DeCaprio D."/>
            <person name="Eiglmeier K."/>
            <person name="Eisenstadt E."/>
            <person name="El-Dorry H."/>
            <person name="Gelbart W.M."/>
            <person name="Gomes S.L."/>
            <person name="Hammond M."/>
            <person name="Hannick L.I."/>
            <person name="Hogan J.R."/>
            <person name="Holmes M.H."/>
            <person name="Jaffe D."/>
            <person name="Johnston S.J."/>
            <person name="Kennedy R.C."/>
            <person name="Koo H."/>
            <person name="Kravitz S."/>
            <person name="Kriventseva E.V."/>
            <person name="Kulp D."/>
            <person name="Labutti K."/>
            <person name="Lee E."/>
            <person name="Li S."/>
            <person name="Lovin D.D."/>
            <person name="Mao C."/>
            <person name="Mauceli E."/>
            <person name="Menck C.F."/>
            <person name="Miller J.R."/>
            <person name="Montgomery P."/>
            <person name="Mori A."/>
            <person name="Nascimento A.L."/>
            <person name="Naveira H.F."/>
            <person name="Nusbaum C."/>
            <person name="O'Leary S.B."/>
            <person name="Orvis J."/>
            <person name="Pertea M."/>
            <person name="Quesneville H."/>
            <person name="Reidenbach K.R."/>
            <person name="Rogers Y.-H.C."/>
            <person name="Roth C.W."/>
            <person name="Schneider J.R."/>
            <person name="Schatz M."/>
            <person name="Shumway M."/>
            <person name="Stanke M."/>
            <person name="Stinson E.O."/>
            <person name="Tubio J.M.C."/>
            <person name="Vanzee J.P."/>
            <person name="Verjovski-Almeida S."/>
            <person name="Werner D."/>
            <person name="White O.R."/>
            <person name="Wyder S."/>
            <person name="Zeng Q."/>
            <person name="Zhao Q."/>
            <person name="Zhao Y."/>
            <person name="Hill C.A."/>
            <person name="Raikhel A.S."/>
            <person name="Soares M.B."/>
            <person name="Knudson D.L."/>
            <person name="Lee N.H."/>
            <person name="Galagan J."/>
            <person name="Salzberg S.L."/>
            <person name="Paulsen I.T."/>
            <person name="Dimopoulos G."/>
            <person name="Collins F.H."/>
            <person name="Bruce B."/>
            <person name="Fraser-Liggett C.M."/>
            <person name="Severson D.W."/>
        </authorList>
    </citation>
    <scope>NUCLEOTIDE SEQUENCE [LARGE SCALE GENOMIC DNA]</scope>
    <source>
        <strain>LVPib12</strain>
    </source>
</reference>
<proteinExistence type="inferred from homology"/>
<evidence type="ECO:0000250" key="1"/>
<evidence type="ECO:0000305" key="2"/>
<comment type="function">
    <text evidence="1">Component of the Mediator complex, a coactivator involved in the regulated transcription of nearly all RNA polymerase II-dependent genes. Mediator functions as a bridge to convey information from gene-specific regulatory proteins to the basal RNA polymerase II transcription machinery. Mediator is recruited to promoters by direct interactions with regulatory proteins and serves as a scaffold for the assembly of a functional preinitiation complex with RNA polymerase II and the general transcription factors (By similarity).</text>
</comment>
<comment type="subunit">
    <text evidence="1">Component of the Mediator complex.</text>
</comment>
<comment type="subcellular location">
    <subcellularLocation>
        <location evidence="2">Nucleus</location>
    </subcellularLocation>
</comment>
<comment type="similarity">
    <text evidence="2">Belongs to the Mediator complex subunit 16 family.</text>
</comment>
<keyword id="KW-0010">Activator</keyword>
<keyword id="KW-0539">Nucleus</keyword>
<keyword id="KW-1185">Reference proteome</keyword>
<keyword id="KW-0677">Repeat</keyword>
<keyword id="KW-0804">Transcription</keyword>
<keyword id="KW-0805">Transcription regulation</keyword>
<keyword id="KW-0853">WD repeat</keyword>
<gene>
    <name type="primary">MED16</name>
    <name type="ORF">AAEL013087</name>
</gene>
<protein>
    <recommendedName>
        <fullName>Mediator of RNA polymerase II transcription subunit 16</fullName>
    </recommendedName>
    <alternativeName>
        <fullName>Mediator complex subunit 16</fullName>
    </alternativeName>
</protein>
<dbReference type="EMBL" id="CH477974">
    <property type="protein sequence ID" value="EAT34700.1"/>
    <property type="molecule type" value="Genomic_DNA"/>
</dbReference>
<dbReference type="RefSeq" id="XP_001663311.1">
    <property type="nucleotide sequence ID" value="XM_001663261.1"/>
</dbReference>
<dbReference type="SMR" id="Q16K67"/>
<dbReference type="FunCoup" id="Q16K67">
    <property type="interactions" value="1083"/>
</dbReference>
<dbReference type="STRING" id="7159.Q16K67"/>
<dbReference type="PaxDb" id="7159-AAEL013087-PA"/>
<dbReference type="GeneID" id="5577215"/>
<dbReference type="KEGG" id="aag:5577215"/>
<dbReference type="CTD" id="10025"/>
<dbReference type="VEuPathDB" id="VectorBase:AAEL013087"/>
<dbReference type="eggNOG" id="ENOG502QQ3H">
    <property type="taxonomic scope" value="Eukaryota"/>
</dbReference>
<dbReference type="HOGENOM" id="CLU_018773_0_0_1"/>
<dbReference type="InParanoid" id="Q16K67"/>
<dbReference type="OMA" id="EIWQPKE"/>
<dbReference type="OrthoDB" id="10018574at2759"/>
<dbReference type="PhylomeDB" id="Q16K67"/>
<dbReference type="Proteomes" id="UP000008820">
    <property type="component" value="Unassembled WGS sequence"/>
</dbReference>
<dbReference type="Proteomes" id="UP000682892">
    <property type="component" value="Chromosome 2"/>
</dbReference>
<dbReference type="GO" id="GO:0016592">
    <property type="term" value="C:mediator complex"/>
    <property type="evidence" value="ECO:0007669"/>
    <property type="project" value="InterPro"/>
</dbReference>
<dbReference type="GO" id="GO:0045893">
    <property type="term" value="P:positive regulation of DNA-templated transcription"/>
    <property type="evidence" value="ECO:0007669"/>
    <property type="project" value="TreeGrafter"/>
</dbReference>
<dbReference type="InterPro" id="IPR048616">
    <property type="entry name" value="MED16_bridge"/>
</dbReference>
<dbReference type="InterPro" id="IPR048338">
    <property type="entry name" value="Mediator_Med16"/>
</dbReference>
<dbReference type="InterPro" id="IPR048339">
    <property type="entry name" value="Mediator_Med16_C"/>
</dbReference>
<dbReference type="InterPro" id="IPR021665">
    <property type="entry name" value="Mediator_Med16_N"/>
</dbReference>
<dbReference type="InterPro" id="IPR036322">
    <property type="entry name" value="WD40_repeat_dom_sf"/>
</dbReference>
<dbReference type="PANTHER" id="PTHR13224:SF6">
    <property type="entry name" value="MEDIATOR OF RNA POLYMERASE II TRANSCRIPTION SUBUNIT 16"/>
    <property type="match status" value="1"/>
</dbReference>
<dbReference type="PANTHER" id="PTHR13224">
    <property type="entry name" value="THYROID HORMONE RECEPTOR-ASSOCIATED PROTEIN-RELATED"/>
    <property type="match status" value="1"/>
</dbReference>
<dbReference type="Pfam" id="PF20718">
    <property type="entry name" value="Med16_bridge"/>
    <property type="match status" value="1"/>
</dbReference>
<dbReference type="Pfam" id="PF20719">
    <property type="entry name" value="Med16_C"/>
    <property type="match status" value="1"/>
</dbReference>
<dbReference type="Pfam" id="PF11635">
    <property type="entry name" value="Med16_N"/>
    <property type="match status" value="1"/>
</dbReference>
<dbReference type="SUPFAM" id="SSF50978">
    <property type="entry name" value="WD40 repeat-like"/>
    <property type="match status" value="1"/>
</dbReference>
<feature type="chain" id="PRO_0000307621" description="Mediator of RNA polymerase II transcription subunit 16">
    <location>
        <begin position="1"/>
        <end position="820"/>
    </location>
</feature>
<feature type="repeat" description="WD 1">
    <location>
        <begin position="74"/>
        <end position="114"/>
    </location>
</feature>
<feature type="repeat" description="WD 2">
    <location>
        <begin position="621"/>
        <end position="665"/>
    </location>
</feature>
<feature type="repeat" description="WD 3">
    <location>
        <begin position="757"/>
        <end position="811"/>
    </location>
</feature>
<sequence>MDLLYTTVRKGNANTFSFTETQHNFEFLCNTSSCNVLAFTTTNELTEPSPIQGWGFHIYVVDLNAPWFPYRVTSNKYPISVLQWDVLGRYLLVGDRNGHVQIFVQKDNLLSEWKSVYSVKFPGENIIAAAFFHNGRKLNLQTDKKDQYLYLEKFQKVKFAASVRQFGGVPVEGVLIVSATGMLGAFVIPPESNANIQKLSEPIKLVPVTESLAVTRNYYTTADICYGKNGYFRVAVGNGDSKSANSNMIQCFRVAVKQREETLEINSTALPSFFLAEGMGKDLKELRVAHVQWVFSEDADSLIVASNHTGGGCFVEQWELTEESTPIHKLFQSNKNEPFKTLLWVSKSQYMYTSKVIKICTTKLNFLSSSFVYLAMSDNSIHCLQRDTLKRLTCTNIVSIRDPNDHSSKQIKLGLKIGAIDVTHLGHLFVTLDTFGQLYVYRCNFMCQDQLGTPALIVQTVNLLEYCLVTGLDSLDILLTLKTQILENVLERLTENFHRQPPNVQQYYYVNFLTMKIALYRLSISGQQKAHDLSNLLILHSILIAFKSLLRPSDLTSHDKGPAENLAMVLSESVPDVDKVLLNVEAKEFTMERPTLQSLQQLIQWVADLALNILAKLPESRSFMSNKSQGYDISKDIIALNSIRELLVMIRIWGLLNPQCLPVFSRSADNLDILGTLFRLLTKLSLNPNEPDDLLLDECCLLPNQVLIPQLQYVPSRTMIASPLLPHVTLPVMCDYGVENESLKFCPEVPIVEGGLSNDNVIDSVMYLQLGRRPPSLRRCTRCGSCSSVVSVAKTAAMKAWEQRWIDKCRCNGFWRLEVA</sequence>
<name>MED16_AEDAE</name>
<organism>
    <name type="scientific">Aedes aegypti</name>
    <name type="common">Yellowfever mosquito</name>
    <name type="synonym">Culex aegypti</name>
    <dbReference type="NCBI Taxonomy" id="7159"/>
    <lineage>
        <taxon>Eukaryota</taxon>
        <taxon>Metazoa</taxon>
        <taxon>Ecdysozoa</taxon>
        <taxon>Arthropoda</taxon>
        <taxon>Hexapoda</taxon>
        <taxon>Insecta</taxon>
        <taxon>Pterygota</taxon>
        <taxon>Neoptera</taxon>
        <taxon>Endopterygota</taxon>
        <taxon>Diptera</taxon>
        <taxon>Nematocera</taxon>
        <taxon>Culicoidea</taxon>
        <taxon>Culicidae</taxon>
        <taxon>Culicinae</taxon>
        <taxon>Aedini</taxon>
        <taxon>Aedes</taxon>
        <taxon>Stegomyia</taxon>
    </lineage>
</organism>